<accession>P75268</accession>
<dbReference type="EC" id="3.1.-.-"/>
<dbReference type="EMBL" id="U00089">
    <property type="protein sequence ID" value="AAB95971.1"/>
    <property type="molecule type" value="Genomic_DNA"/>
</dbReference>
<dbReference type="PIR" id="S73649">
    <property type="entry name" value="S73649"/>
</dbReference>
<dbReference type="RefSeq" id="NP_110207.1">
    <property type="nucleotide sequence ID" value="NC_000912.1"/>
</dbReference>
<dbReference type="RefSeq" id="WP_010874875.1">
    <property type="nucleotide sequence ID" value="NZ_OU342337.1"/>
</dbReference>
<dbReference type="SMR" id="P75268"/>
<dbReference type="STRING" id="272634.MPN_519"/>
<dbReference type="ESTHER" id="mycpn-esl3">
    <property type="family name" value="AlphaBeta_hydrolase"/>
</dbReference>
<dbReference type="EnsemblBacteria" id="AAB95971">
    <property type="protein sequence ID" value="AAB95971"/>
    <property type="gene ID" value="MPN_519"/>
</dbReference>
<dbReference type="KEGG" id="mpn:MPN_519"/>
<dbReference type="PATRIC" id="fig|272634.6.peg.575"/>
<dbReference type="HOGENOM" id="CLU_020336_41_1_14"/>
<dbReference type="OrthoDB" id="403987at2"/>
<dbReference type="BioCyc" id="MPNE272634:G1GJ3-852-MONOMER"/>
<dbReference type="Proteomes" id="UP000000808">
    <property type="component" value="Chromosome"/>
</dbReference>
<dbReference type="GO" id="GO:0016020">
    <property type="term" value="C:membrane"/>
    <property type="evidence" value="ECO:0007669"/>
    <property type="project" value="TreeGrafter"/>
</dbReference>
<dbReference type="GO" id="GO:0052689">
    <property type="term" value="F:carboxylic ester hydrolase activity"/>
    <property type="evidence" value="ECO:0007669"/>
    <property type="project" value="UniProtKB-KW"/>
</dbReference>
<dbReference type="Gene3D" id="3.40.50.1820">
    <property type="entry name" value="alpha/beta hydrolase"/>
    <property type="match status" value="1"/>
</dbReference>
<dbReference type="InterPro" id="IPR000073">
    <property type="entry name" value="AB_hydrolase_1"/>
</dbReference>
<dbReference type="InterPro" id="IPR029058">
    <property type="entry name" value="AB_hydrolase_fold"/>
</dbReference>
<dbReference type="InterPro" id="IPR050266">
    <property type="entry name" value="AB_hydrolase_sf"/>
</dbReference>
<dbReference type="PANTHER" id="PTHR43798:SF33">
    <property type="entry name" value="HYDROLASE, PUTATIVE (AFU_ORTHOLOGUE AFUA_2G14860)-RELATED"/>
    <property type="match status" value="1"/>
</dbReference>
<dbReference type="PANTHER" id="PTHR43798">
    <property type="entry name" value="MONOACYLGLYCEROL LIPASE"/>
    <property type="match status" value="1"/>
</dbReference>
<dbReference type="Pfam" id="PF12697">
    <property type="entry name" value="Abhydrolase_6"/>
    <property type="match status" value="1"/>
</dbReference>
<dbReference type="SUPFAM" id="SSF53474">
    <property type="entry name" value="alpha/beta-Hydrolases"/>
    <property type="match status" value="1"/>
</dbReference>
<comment type="similarity">
    <text evidence="3">Belongs to the lipase/esterase LIP3/BchO family.</text>
</comment>
<sequence length="272" mass="31802">MRDKVNINTVDISQLEVFFQPAKKPAKQTIVFAHGFSVHHSYFKSFSETLVDYDYYAPLWPGHNHHGFTDKELSPIHYAHLLVAWIEKQDLENIVLIGHSMGGAVASYALQFLKPQRVEKLVLLAPLSYSNLLNYYKIKKAFKKKDEKLSYFKRMFQPKFPDLQNDGQWQMELDKHTAMCKKLTFQIFKELSRLNSAYKTITIPAFLLLAQHDDFMPTKATLNYFNRFLIKKGNLQSGVILHSQHQMFNSKHESFCKAMHDILKHNKLSKIY</sequence>
<name>ESL3_MYCPN</name>
<feature type="chain" id="PRO_0000207079" description="Putative esterase/lipase 3">
    <location>
        <begin position="1"/>
        <end position="272"/>
    </location>
</feature>
<feature type="active site" evidence="2">
    <location>
        <position position="34"/>
    </location>
</feature>
<feature type="active site" description="Charge relay system" evidence="1">
    <location>
        <position position="100"/>
    </location>
</feature>
<reference key="1">
    <citation type="journal article" date="1996" name="Nucleic Acids Res.">
        <title>Complete sequence analysis of the genome of the bacterium Mycoplasma pneumoniae.</title>
        <authorList>
            <person name="Himmelreich R."/>
            <person name="Hilbert H."/>
            <person name="Plagens H."/>
            <person name="Pirkl E."/>
            <person name="Li B.-C."/>
            <person name="Herrmann R."/>
        </authorList>
    </citation>
    <scope>NUCLEOTIDE SEQUENCE [LARGE SCALE GENOMIC DNA]</scope>
    <source>
        <strain>ATCC 29342 / M129 / Subtype 1</strain>
    </source>
</reference>
<evidence type="ECO:0000250" key="1"/>
<evidence type="ECO:0000255" key="2"/>
<evidence type="ECO:0000305" key="3"/>
<keyword id="KW-0378">Hydrolase</keyword>
<keyword id="KW-1185">Reference proteome</keyword>
<keyword id="KW-0719">Serine esterase</keyword>
<protein>
    <recommendedName>
        <fullName>Putative esterase/lipase 3</fullName>
        <ecNumber>3.1.-.-</ecNumber>
    </recommendedName>
</protein>
<proteinExistence type="inferred from homology"/>
<organism>
    <name type="scientific">Mycoplasma pneumoniae (strain ATCC 29342 / M129 / Subtype 1)</name>
    <name type="common">Mycoplasmoides pneumoniae</name>
    <dbReference type="NCBI Taxonomy" id="272634"/>
    <lineage>
        <taxon>Bacteria</taxon>
        <taxon>Bacillati</taxon>
        <taxon>Mycoplasmatota</taxon>
        <taxon>Mycoplasmoidales</taxon>
        <taxon>Mycoplasmoidaceae</taxon>
        <taxon>Mycoplasmoides</taxon>
    </lineage>
</organism>
<gene>
    <name type="ordered locus">MPN_519</name>
    <name type="ORF">MP323</name>
</gene>